<accession>B2V599</accession>
<evidence type="ECO:0000255" key="1">
    <source>
        <dbReference type="HAMAP-Rule" id="MF_00382"/>
    </source>
</evidence>
<evidence type="ECO:0000305" key="2"/>
<keyword id="KW-0687">Ribonucleoprotein</keyword>
<keyword id="KW-0689">Ribosomal protein</keyword>
<keyword id="KW-0694">RNA-binding</keyword>
<keyword id="KW-0699">rRNA-binding</keyword>
<comment type="function">
    <text evidence="1">Binds directly to 23S ribosomal RNA and is necessary for the in vitro assembly process of the 50S ribosomal subunit. It is not involved in the protein synthesizing functions of that subunit.</text>
</comment>
<comment type="similarity">
    <text evidence="1">Belongs to the bacterial ribosomal protein bL20 family.</text>
</comment>
<name>RL20_CLOBA</name>
<protein>
    <recommendedName>
        <fullName evidence="1">Large ribosomal subunit protein bL20</fullName>
    </recommendedName>
    <alternativeName>
        <fullName evidence="2">50S ribosomal protein L20</fullName>
    </alternativeName>
</protein>
<dbReference type="EMBL" id="CP001078">
    <property type="protein sequence ID" value="ACD52589.1"/>
    <property type="molecule type" value="Genomic_DNA"/>
</dbReference>
<dbReference type="RefSeq" id="WP_003369926.1">
    <property type="nucleotide sequence ID" value="NC_010723.1"/>
</dbReference>
<dbReference type="SMR" id="B2V599"/>
<dbReference type="KEGG" id="cbt:CLH_2247"/>
<dbReference type="HOGENOM" id="CLU_123265_0_1_9"/>
<dbReference type="GO" id="GO:1990904">
    <property type="term" value="C:ribonucleoprotein complex"/>
    <property type="evidence" value="ECO:0007669"/>
    <property type="project" value="UniProtKB-KW"/>
</dbReference>
<dbReference type="GO" id="GO:0005840">
    <property type="term" value="C:ribosome"/>
    <property type="evidence" value="ECO:0007669"/>
    <property type="project" value="UniProtKB-KW"/>
</dbReference>
<dbReference type="GO" id="GO:0019843">
    <property type="term" value="F:rRNA binding"/>
    <property type="evidence" value="ECO:0007669"/>
    <property type="project" value="UniProtKB-UniRule"/>
</dbReference>
<dbReference type="GO" id="GO:0003735">
    <property type="term" value="F:structural constituent of ribosome"/>
    <property type="evidence" value="ECO:0007669"/>
    <property type="project" value="InterPro"/>
</dbReference>
<dbReference type="GO" id="GO:0000027">
    <property type="term" value="P:ribosomal large subunit assembly"/>
    <property type="evidence" value="ECO:0007669"/>
    <property type="project" value="UniProtKB-UniRule"/>
</dbReference>
<dbReference type="GO" id="GO:0006412">
    <property type="term" value="P:translation"/>
    <property type="evidence" value="ECO:0007669"/>
    <property type="project" value="InterPro"/>
</dbReference>
<dbReference type="CDD" id="cd07026">
    <property type="entry name" value="Ribosomal_L20"/>
    <property type="match status" value="1"/>
</dbReference>
<dbReference type="FunFam" id="1.10.1900.20:FF:000001">
    <property type="entry name" value="50S ribosomal protein L20"/>
    <property type="match status" value="1"/>
</dbReference>
<dbReference type="Gene3D" id="6.10.160.10">
    <property type="match status" value="1"/>
</dbReference>
<dbReference type="Gene3D" id="1.10.1900.20">
    <property type="entry name" value="Ribosomal protein L20"/>
    <property type="match status" value="1"/>
</dbReference>
<dbReference type="HAMAP" id="MF_00382">
    <property type="entry name" value="Ribosomal_bL20"/>
    <property type="match status" value="1"/>
</dbReference>
<dbReference type="InterPro" id="IPR005813">
    <property type="entry name" value="Ribosomal_bL20"/>
</dbReference>
<dbReference type="InterPro" id="IPR049946">
    <property type="entry name" value="RIBOSOMAL_L20_CS"/>
</dbReference>
<dbReference type="InterPro" id="IPR035566">
    <property type="entry name" value="Ribosomal_protein_bL20_C"/>
</dbReference>
<dbReference type="NCBIfam" id="TIGR01032">
    <property type="entry name" value="rplT_bact"/>
    <property type="match status" value="1"/>
</dbReference>
<dbReference type="PANTHER" id="PTHR10986">
    <property type="entry name" value="39S RIBOSOMAL PROTEIN L20"/>
    <property type="match status" value="1"/>
</dbReference>
<dbReference type="Pfam" id="PF00453">
    <property type="entry name" value="Ribosomal_L20"/>
    <property type="match status" value="1"/>
</dbReference>
<dbReference type="PRINTS" id="PR00062">
    <property type="entry name" value="RIBOSOMALL20"/>
</dbReference>
<dbReference type="SUPFAM" id="SSF74731">
    <property type="entry name" value="Ribosomal protein L20"/>
    <property type="match status" value="1"/>
</dbReference>
<dbReference type="PROSITE" id="PS00937">
    <property type="entry name" value="RIBOSOMAL_L20"/>
    <property type="match status" value="1"/>
</dbReference>
<gene>
    <name evidence="1" type="primary">rplT</name>
    <name type="ordered locus">CLH_2247</name>
</gene>
<organism>
    <name type="scientific">Clostridium botulinum (strain Alaska E43 / Type E3)</name>
    <dbReference type="NCBI Taxonomy" id="508767"/>
    <lineage>
        <taxon>Bacteria</taxon>
        <taxon>Bacillati</taxon>
        <taxon>Bacillota</taxon>
        <taxon>Clostridia</taxon>
        <taxon>Eubacteriales</taxon>
        <taxon>Clostridiaceae</taxon>
        <taxon>Clostridium</taxon>
    </lineage>
</organism>
<sequence>MARVKRAKNARKNHKKVLKLAKGYYGGKSKLFKTANESVIRALRNSYVGRKNKKRDYRRLWIARINAATRINGLSYSKFMNGIKLAGIDINRKMLSEIAINDAKAFADLVEVAKKQLNA</sequence>
<proteinExistence type="inferred from homology"/>
<feature type="chain" id="PRO_1000122294" description="Large ribosomal subunit protein bL20">
    <location>
        <begin position="1"/>
        <end position="119"/>
    </location>
</feature>
<reference key="1">
    <citation type="submission" date="2008-05" db="EMBL/GenBank/DDBJ databases">
        <title>Complete genome sequence of Clostridium botulinum E3 str. Alaska E43.</title>
        <authorList>
            <person name="Brinkac L.M."/>
            <person name="Brown J.L."/>
            <person name="Bruce D."/>
            <person name="Detter C."/>
            <person name="Munk C."/>
            <person name="Smith L.A."/>
            <person name="Smith T.J."/>
            <person name="Sutton G."/>
            <person name="Brettin T.S."/>
        </authorList>
    </citation>
    <scope>NUCLEOTIDE SEQUENCE [LARGE SCALE GENOMIC DNA]</scope>
    <source>
        <strain>Alaska E43 / Type E3</strain>
    </source>
</reference>